<comment type="function">
    <text evidence="2 3 8">G-protein coupled receptor for 5-hydroxytryptamine (serotonin) (PubMed:15862800). Also functions as a receptor for various drugs and psychoactive substances, including mescaline, psilocybin, 1-(2,5-dimethoxy-4-iodophenyl)-2-aminopropane (DOI) and lysergic acid diethylamide (LSD) (By similarity). Ligand binding causes a conformation change that triggers signaling via guanine nucleotide-binding proteins (G proteins) and modulates the activity of downstream effectors (By similarity). HTR2A is coupled to G(q)/G(11) G alpha proteins and activates phospholipase C-beta, releasing diacylglycerol (DAG) and inositol 1,4,5-trisphosphate (IP3) second messengers that modulate the activity of phosphatidylinositol 3-kinase and promote the release of Ca(2+) ions from intracellular stores, respectively (By similarity). Beta-arrestin family members inhibit signaling via G proteins and mediate activation of alternative signaling pathways (By similarity). Affects neural activity, perception, cognition and mood (By similarity). Plays a role in the regulation of behavior, including responses to anxiogenic situations and psychoactive substances (By similarity). Plays a role in intestinal smooth muscle contraction, and may play a role in arterial vasoconstriction (By similarity).</text>
</comment>
<comment type="activity regulation">
    <text evidence="2">G-protein coupled receptor activity is regulated by lipids: oleamide increases HTR2A-mediated activity.</text>
</comment>
<comment type="subunit">
    <text evidence="2">Interacts (via C-terminus) with MPDZ and PATJ. May interact (via C-terminus) with MPP3, PRDX6, DLG4, DLG1, CASK, APBA1 and MAGI2. Interacts with GRM2 and DRD2; this may affect signaling.</text>
</comment>
<comment type="subcellular location">
    <subcellularLocation>
        <location evidence="8">Cell membrane</location>
        <topology evidence="8">Multi-pass membrane protein</topology>
    </subcellularLocation>
    <subcellularLocation>
        <location evidence="3">Cell projection</location>
        <location evidence="3">Dendrite</location>
    </subcellularLocation>
    <subcellularLocation>
        <location evidence="1">Cell projection</location>
        <location evidence="1">Axon</location>
    </subcellularLocation>
    <subcellularLocation>
        <location evidence="1">Cytoplasmic vesicle</location>
    </subcellularLocation>
    <subcellularLocation>
        <location evidence="1">Membrane</location>
        <location evidence="1">Caveola</location>
    </subcellularLocation>
    <subcellularLocation>
        <location evidence="1">Presynapse</location>
    </subcellularLocation>
</comment>
<comment type="tissue specificity">
    <text evidence="8">Ubiquitous.</text>
</comment>
<comment type="domain">
    <text evidence="2">The PDZ domain-binding motif is involved in the interaction with PATJ, CASK, APBA1, DLG1 and DLG4.</text>
</comment>
<comment type="similarity">
    <text evidence="6">Belongs to the G-protein coupled receptor 1 family.</text>
</comment>
<accession>O46635</accession>
<accession>Q50DZ9</accession>
<accession>Q60F96</accession>
<proteinExistence type="evidence at transcript level"/>
<organism>
    <name type="scientific">Canis lupus familiaris</name>
    <name type="common">Dog</name>
    <name type="synonym">Canis familiaris</name>
    <dbReference type="NCBI Taxonomy" id="9615"/>
    <lineage>
        <taxon>Eukaryota</taxon>
        <taxon>Metazoa</taxon>
        <taxon>Chordata</taxon>
        <taxon>Craniata</taxon>
        <taxon>Vertebrata</taxon>
        <taxon>Euteleostomi</taxon>
        <taxon>Mammalia</taxon>
        <taxon>Eutheria</taxon>
        <taxon>Laurasiatheria</taxon>
        <taxon>Carnivora</taxon>
        <taxon>Caniformia</taxon>
        <taxon>Canidae</taxon>
        <taxon>Canis</taxon>
    </lineage>
</organism>
<gene>
    <name type="primary">HTR2A</name>
    <name type="synonym">5-HTR2A</name>
</gene>
<protein>
    <recommendedName>
        <fullName>5-hydroxytryptamine receptor 2A</fullName>
        <shortName>5-HT-2</shortName>
        <shortName>5-HT-2A</shortName>
        <shortName>5-hydroxytryptamine receptor</shortName>
    </recommendedName>
    <alternativeName>
        <fullName>Serotonin receptor 2A</fullName>
    </alternativeName>
</protein>
<feature type="chain" id="PRO_0000068943" description="5-hydroxytryptamine receptor 2A">
    <location>
        <begin position="1"/>
        <end position="470"/>
    </location>
</feature>
<feature type="topological domain" description="Extracellular" evidence="2">
    <location>
        <begin position="1"/>
        <end position="80"/>
    </location>
</feature>
<feature type="transmembrane region" description="Helical; Name=1" evidence="2">
    <location>
        <begin position="81"/>
        <end position="97"/>
    </location>
</feature>
<feature type="topological domain" description="Cytoplasmic" evidence="2">
    <location>
        <begin position="98"/>
        <end position="111"/>
    </location>
</feature>
<feature type="transmembrane region" description="Helical; Name=2" evidence="2">
    <location>
        <begin position="112"/>
        <end position="137"/>
    </location>
</feature>
<feature type="topological domain" description="Extracellular" evidence="2">
    <location>
        <begin position="138"/>
        <end position="146"/>
    </location>
</feature>
<feature type="transmembrane region" description="Helical; Name=3" evidence="2">
    <location>
        <begin position="147"/>
        <end position="171"/>
    </location>
</feature>
<feature type="topological domain" description="Cytoplasmic" evidence="2">
    <location>
        <begin position="172"/>
        <end position="191"/>
    </location>
</feature>
<feature type="transmembrane region" description="Helical; Name=4" evidence="2">
    <location>
        <begin position="192"/>
        <end position="215"/>
    </location>
</feature>
<feature type="topological domain" description="Extracellular" evidence="2">
    <location>
        <begin position="216"/>
        <end position="232"/>
    </location>
</feature>
<feature type="transmembrane region" description="Helical; Name=5" evidence="2">
    <location>
        <begin position="233"/>
        <end position="258"/>
    </location>
</feature>
<feature type="topological domain" description="Cytoplasmic" evidence="2">
    <location>
        <begin position="259"/>
        <end position="321"/>
    </location>
</feature>
<feature type="transmembrane region" description="Helical; Name=6" evidence="2">
    <location>
        <begin position="322"/>
        <end position="347"/>
    </location>
</feature>
<feature type="topological domain" description="Extracellular" evidence="2">
    <location>
        <begin position="348"/>
        <end position="355"/>
    </location>
</feature>
<feature type="transmembrane region" description="Helical; Name=7" evidence="2">
    <location>
        <begin position="356"/>
        <end position="381"/>
    </location>
</feature>
<feature type="topological domain" description="Cytoplasmic" evidence="2">
    <location>
        <begin position="382"/>
        <end position="470"/>
    </location>
</feature>
<feature type="region of interest" description="Disordered" evidence="7">
    <location>
        <begin position="1"/>
        <end position="23"/>
    </location>
</feature>
<feature type="short sequence motif" description="DRY motif; important for ligand-induced conformation changes" evidence="4">
    <location>
        <begin position="172"/>
        <end position="174"/>
    </location>
</feature>
<feature type="short sequence motif" description="NPxxY motif; important for ligand-induced conformation changes and signaling" evidence="4">
    <location>
        <begin position="375"/>
        <end position="379"/>
    </location>
</feature>
<feature type="short sequence motif" description="PDZ-binding" evidence="2">
    <location>
        <begin position="468"/>
        <end position="470"/>
    </location>
</feature>
<feature type="compositionally biased region" description="Low complexity" evidence="7">
    <location>
        <begin position="10"/>
        <end position="21"/>
    </location>
</feature>
<feature type="binding site" evidence="2">
    <location>
        <position position="155"/>
    </location>
    <ligand>
        <name>serotonin</name>
        <dbReference type="ChEBI" id="CHEBI:350546"/>
    </ligand>
</feature>
<feature type="binding site" evidence="2">
    <location>
        <position position="342"/>
    </location>
    <ligand>
        <name>serotonin</name>
        <dbReference type="ChEBI" id="CHEBI:350546"/>
    </ligand>
</feature>
<feature type="site" description="Hydrophobic barrier that decreases the speed of ligand binding and dissociation" evidence="2">
    <location>
        <position position="229"/>
    </location>
</feature>
<feature type="modified residue" description="Phosphoserine" evidence="2">
    <location>
        <position position="280"/>
    </location>
</feature>
<feature type="glycosylation site" description="N-linked (GlcNAc...) asparagine" evidence="5">
    <location>
        <position position="38"/>
    </location>
</feature>
<feature type="glycosylation site" description="N-linked (GlcNAc...) asparagine" evidence="5">
    <location>
        <position position="44"/>
    </location>
</feature>
<feature type="glycosylation site" description="N-linked (GlcNAc...) asparagine" evidence="5">
    <location>
        <position position="51"/>
    </location>
</feature>
<feature type="glycosylation site" description="N-linked (GlcNAc...) asparagine" evidence="5">
    <location>
        <position position="54"/>
    </location>
</feature>
<feature type="disulfide bond" evidence="6">
    <location>
        <begin position="148"/>
        <end position="227"/>
    </location>
</feature>
<feature type="disulfide bond" evidence="6">
    <location>
        <begin position="348"/>
        <end position="352"/>
    </location>
</feature>
<evidence type="ECO:0000250" key="1">
    <source>
        <dbReference type="UniProtKB" id="P14842"/>
    </source>
</evidence>
<evidence type="ECO:0000250" key="2">
    <source>
        <dbReference type="UniProtKB" id="P28223"/>
    </source>
</evidence>
<evidence type="ECO:0000250" key="3">
    <source>
        <dbReference type="UniProtKB" id="P35363"/>
    </source>
</evidence>
<evidence type="ECO:0000250" key="4">
    <source>
        <dbReference type="UniProtKB" id="P41595"/>
    </source>
</evidence>
<evidence type="ECO:0000255" key="5"/>
<evidence type="ECO:0000255" key="6">
    <source>
        <dbReference type="PROSITE-ProRule" id="PRU00521"/>
    </source>
</evidence>
<evidence type="ECO:0000256" key="7">
    <source>
        <dbReference type="SAM" id="MobiDB-lite"/>
    </source>
</evidence>
<evidence type="ECO:0000269" key="8">
    <source>
    </source>
</evidence>
<keyword id="KW-0085">Behavior</keyword>
<keyword id="KW-1003">Cell membrane</keyword>
<keyword id="KW-0966">Cell projection</keyword>
<keyword id="KW-0968">Cytoplasmic vesicle</keyword>
<keyword id="KW-1015">Disulfide bond</keyword>
<keyword id="KW-0297">G-protein coupled receptor</keyword>
<keyword id="KW-0325">Glycoprotein</keyword>
<keyword id="KW-0472">Membrane</keyword>
<keyword id="KW-0597">Phosphoprotein</keyword>
<keyword id="KW-0675">Receptor</keyword>
<keyword id="KW-1185">Reference proteome</keyword>
<keyword id="KW-0770">Synapse</keyword>
<keyword id="KW-0807">Transducer</keyword>
<keyword id="KW-0812">Transmembrane</keyword>
<keyword id="KW-1133">Transmembrane helix</keyword>
<name>5HT2A_CANLF</name>
<sequence length="470" mass="52378">MDVLFEDNAPLSPTTSSLMPSNGDPRLYGNDLNAGDANTSDAFNWTVDAENRTNLSCEGCLSPPCFSLLHLQEKNWSALLTAVVIILTIAGNILVIMAVSLEKKLQNATNYFLMSLAIADMLLGFLVMPVSMLTILYGYRWPLPSKLCAVWIYLDVLFSTASIMHLCAISLDRYVAIQNPIHHSRFNSRTKAFLKIIAVWTISVGISMPIPVFGLQDDSKVFKEGSCLLADDNFVLIGSFVSFFIPLTIMVITYFLTIKSLQKEATLCVSDPGTRAKLASFSFLPQSSLSSEKLFQRSIHREPGSYGRRTMQSISNEQKACKVLGIVFFLFVVMWCPFFITNIMAVICKESCNEDIIGALLNVFVWIGYLSSAVNPLVYTLFNKTYRSAFSRYIQCQYKENKKPLQLILVNTIPALAYKSSQLQMGQKKNSKKDAKSTDNDYSMVALGKQHSEDAPTDNINTVNEKVSCV</sequence>
<dbReference type="EMBL" id="AB193092">
    <property type="protein sequence ID" value="BAD60922.1"/>
    <property type="molecule type" value="mRNA"/>
</dbReference>
<dbReference type="EMBL" id="AY832858">
    <property type="protein sequence ID" value="AAX39385.1"/>
    <property type="molecule type" value="mRNA"/>
</dbReference>
<dbReference type="EMBL" id="Y16134">
    <property type="protein sequence ID" value="CAA76080.1"/>
    <property type="molecule type" value="mRNA"/>
</dbReference>
<dbReference type="RefSeq" id="NP_001005869.1">
    <property type="nucleotide sequence ID" value="NM_001005869.1"/>
</dbReference>
<dbReference type="SMR" id="O46635"/>
<dbReference type="FunCoup" id="O46635">
    <property type="interactions" value="257"/>
</dbReference>
<dbReference type="STRING" id="9615.ENSCAFP00000050411"/>
<dbReference type="BindingDB" id="O46635"/>
<dbReference type="ChEMBL" id="CHEMBL5781"/>
<dbReference type="GlyCosmos" id="O46635">
    <property type="glycosylation" value="4 sites, No reported glycans"/>
</dbReference>
<dbReference type="PaxDb" id="9615-ENSCAFP00000050411"/>
<dbReference type="Ensembl" id="ENSCAFT00000081998.2">
    <property type="protein sequence ID" value="ENSCAFP00000074786.1"/>
    <property type="gene ID" value="ENSCAFG00000045223.2"/>
</dbReference>
<dbReference type="Ensembl" id="ENSCAFT00030043991.1">
    <property type="protein sequence ID" value="ENSCAFP00030038397.1"/>
    <property type="gene ID" value="ENSCAFG00030023919.1"/>
</dbReference>
<dbReference type="Ensembl" id="ENSCAFT00040025336.1">
    <property type="protein sequence ID" value="ENSCAFP00040022022.1"/>
    <property type="gene ID" value="ENSCAFG00040013721.1"/>
</dbReference>
<dbReference type="Ensembl" id="ENSCAFT00845012480.1">
    <property type="protein sequence ID" value="ENSCAFP00845009749.1"/>
    <property type="gene ID" value="ENSCAFG00845007028.1"/>
</dbReference>
<dbReference type="GeneID" id="403882"/>
<dbReference type="KEGG" id="cfa:403882"/>
<dbReference type="CTD" id="3356"/>
<dbReference type="VEuPathDB" id="HostDB:ENSCAFG00845007028"/>
<dbReference type="VGNC" id="VGNC:110511">
    <property type="gene designation" value="HTR2A"/>
</dbReference>
<dbReference type="GeneTree" id="ENSGT01050000244937"/>
<dbReference type="InParanoid" id="O46635"/>
<dbReference type="OrthoDB" id="420518at2759"/>
<dbReference type="Reactome" id="R-CFA-390666">
    <property type="pathway name" value="Serotonin receptors"/>
</dbReference>
<dbReference type="Reactome" id="R-CFA-416476">
    <property type="pathway name" value="G alpha (q) signalling events"/>
</dbReference>
<dbReference type="PRO" id="PR:O46635"/>
<dbReference type="Proteomes" id="UP000002254">
    <property type="component" value="Chromosome 22"/>
</dbReference>
<dbReference type="Proteomes" id="UP000694429">
    <property type="component" value="Chromosome 22"/>
</dbReference>
<dbReference type="Proteomes" id="UP000694542">
    <property type="component" value="Chromosome 22"/>
</dbReference>
<dbReference type="Proteomes" id="UP000805418">
    <property type="component" value="Chromosome 22"/>
</dbReference>
<dbReference type="GO" id="GO:0030424">
    <property type="term" value="C:axon"/>
    <property type="evidence" value="ECO:0007669"/>
    <property type="project" value="UniProtKB-SubCell"/>
</dbReference>
<dbReference type="GO" id="GO:0005901">
    <property type="term" value="C:caveola"/>
    <property type="evidence" value="ECO:0007669"/>
    <property type="project" value="UniProtKB-SubCell"/>
</dbReference>
<dbReference type="GO" id="GO:0031410">
    <property type="term" value="C:cytoplasmic vesicle"/>
    <property type="evidence" value="ECO:0007669"/>
    <property type="project" value="UniProtKB-KW"/>
</dbReference>
<dbReference type="GO" id="GO:0030425">
    <property type="term" value="C:dendrite"/>
    <property type="evidence" value="ECO:0000318"/>
    <property type="project" value="GO_Central"/>
</dbReference>
<dbReference type="GO" id="GO:0098666">
    <property type="term" value="C:G protein-coupled serotonin receptor complex"/>
    <property type="evidence" value="ECO:0000314"/>
    <property type="project" value="UniProtKB"/>
</dbReference>
<dbReference type="GO" id="GO:0005886">
    <property type="term" value="C:plasma membrane"/>
    <property type="evidence" value="ECO:0000314"/>
    <property type="project" value="UniProtKB"/>
</dbReference>
<dbReference type="GO" id="GO:0098793">
    <property type="term" value="C:presynapse"/>
    <property type="evidence" value="ECO:0007669"/>
    <property type="project" value="UniProtKB-SubCell"/>
</dbReference>
<dbReference type="GO" id="GO:0071886">
    <property type="term" value="F:1-(4-iodo-2,5-dimethoxyphenyl)propan-2-amine binding"/>
    <property type="evidence" value="ECO:0007669"/>
    <property type="project" value="Ensembl"/>
</dbReference>
<dbReference type="GO" id="GO:0004993">
    <property type="term" value="F:G protein-coupled serotonin receptor activity"/>
    <property type="evidence" value="ECO:0000314"/>
    <property type="project" value="UniProtKB"/>
</dbReference>
<dbReference type="GO" id="GO:0001587">
    <property type="term" value="F:Gq/11-coupled serotonin receptor activity"/>
    <property type="evidence" value="ECO:0007669"/>
    <property type="project" value="Ensembl"/>
</dbReference>
<dbReference type="GO" id="GO:0042802">
    <property type="term" value="F:identical protein binding"/>
    <property type="evidence" value="ECO:0007669"/>
    <property type="project" value="Ensembl"/>
</dbReference>
<dbReference type="GO" id="GO:0030594">
    <property type="term" value="F:neurotransmitter receptor activity"/>
    <property type="evidence" value="ECO:0000318"/>
    <property type="project" value="GO_Central"/>
</dbReference>
<dbReference type="GO" id="GO:0051378">
    <property type="term" value="F:serotonin binding"/>
    <property type="evidence" value="ECO:0000314"/>
    <property type="project" value="UniProtKB"/>
</dbReference>
<dbReference type="GO" id="GO:0099589">
    <property type="term" value="F:serotonin receptor activity"/>
    <property type="evidence" value="ECO:0007669"/>
    <property type="project" value="Ensembl"/>
</dbReference>
<dbReference type="GO" id="GO:0007268">
    <property type="term" value="P:chemical synaptic transmission"/>
    <property type="evidence" value="ECO:0000318"/>
    <property type="project" value="GO_Central"/>
</dbReference>
<dbReference type="GO" id="GO:0007187">
    <property type="term" value="P:G protein-coupled receptor signaling pathway, coupled to cyclic nucleotide second messenger"/>
    <property type="evidence" value="ECO:0000318"/>
    <property type="project" value="GO_Central"/>
</dbReference>
<dbReference type="GO" id="GO:0006874">
    <property type="term" value="P:intracellular calcium ion homeostasis"/>
    <property type="evidence" value="ECO:0007669"/>
    <property type="project" value="Ensembl"/>
</dbReference>
<dbReference type="GO" id="GO:0007208">
    <property type="term" value="P:phospholipase C-activating serotonin receptor signaling pathway"/>
    <property type="evidence" value="ECO:0000318"/>
    <property type="project" value="GO_Central"/>
</dbReference>
<dbReference type="GO" id="GO:0070374">
    <property type="term" value="P:positive regulation of ERK1 and ERK2 cascade"/>
    <property type="evidence" value="ECO:0007669"/>
    <property type="project" value="Ensembl"/>
</dbReference>
<dbReference type="GO" id="GO:0010513">
    <property type="term" value="P:positive regulation of phosphatidylinositol biosynthetic process"/>
    <property type="evidence" value="ECO:0007669"/>
    <property type="project" value="Ensembl"/>
</dbReference>
<dbReference type="GO" id="GO:0051209">
    <property type="term" value="P:release of sequestered calcium ion into cytosol"/>
    <property type="evidence" value="ECO:0000314"/>
    <property type="project" value="UniProtKB"/>
</dbReference>
<dbReference type="GO" id="GO:0009410">
    <property type="term" value="P:response to xenobiotic stimulus"/>
    <property type="evidence" value="ECO:0000314"/>
    <property type="project" value="UniProtKB"/>
</dbReference>
<dbReference type="GO" id="GO:0007210">
    <property type="term" value="P:serotonin receptor signaling pathway"/>
    <property type="evidence" value="ECO:0000318"/>
    <property type="project" value="GO_Central"/>
</dbReference>
<dbReference type="CDD" id="cd15304">
    <property type="entry name" value="7tmA_5-HT2A"/>
    <property type="match status" value="1"/>
</dbReference>
<dbReference type="Gene3D" id="1.20.1070.10">
    <property type="entry name" value="Rhodopsin 7-helix transmembrane proteins"/>
    <property type="match status" value="1"/>
</dbReference>
<dbReference type="InterPro" id="IPR000455">
    <property type="entry name" value="5HT2A_rcpt"/>
</dbReference>
<dbReference type="InterPro" id="IPR002231">
    <property type="entry name" value="5HT_rcpt"/>
</dbReference>
<dbReference type="InterPro" id="IPR000276">
    <property type="entry name" value="GPCR_Rhodpsn"/>
</dbReference>
<dbReference type="InterPro" id="IPR017452">
    <property type="entry name" value="GPCR_Rhodpsn_7TM"/>
</dbReference>
<dbReference type="PANTHER" id="PTHR24247">
    <property type="entry name" value="5-HYDROXYTRYPTAMINE RECEPTOR"/>
    <property type="match status" value="1"/>
</dbReference>
<dbReference type="PANTHER" id="PTHR24247:SF30">
    <property type="entry name" value="5-HYDROXYTRYPTAMINE RECEPTOR 2A"/>
    <property type="match status" value="1"/>
</dbReference>
<dbReference type="Pfam" id="PF00001">
    <property type="entry name" value="7tm_1"/>
    <property type="match status" value="1"/>
</dbReference>
<dbReference type="PRINTS" id="PR00516">
    <property type="entry name" value="5HT2ARECEPTR"/>
</dbReference>
<dbReference type="PRINTS" id="PR01101">
    <property type="entry name" value="5HTRECEPTOR"/>
</dbReference>
<dbReference type="PRINTS" id="PR00237">
    <property type="entry name" value="GPCRRHODOPSN"/>
</dbReference>
<dbReference type="SMART" id="SM01381">
    <property type="entry name" value="7TM_GPCR_Srsx"/>
    <property type="match status" value="1"/>
</dbReference>
<dbReference type="SUPFAM" id="SSF81321">
    <property type="entry name" value="Family A G protein-coupled receptor-like"/>
    <property type="match status" value="1"/>
</dbReference>
<dbReference type="PROSITE" id="PS00237">
    <property type="entry name" value="G_PROTEIN_RECEP_F1_1"/>
    <property type="match status" value="1"/>
</dbReference>
<dbReference type="PROSITE" id="PS50262">
    <property type="entry name" value="G_PROTEIN_RECEP_F1_2"/>
    <property type="match status" value="1"/>
</dbReference>
<reference key="1">
    <citation type="journal article" date="2004" name="J. Vet. Med. Sci.">
        <title>Sequencing of canine 5-hydroxytriptamine receptor (5-HTR) 1B, 2A, 2C genes and identification of polymorphisms in the 5-HTR1B gene.</title>
        <authorList>
            <person name="Masuda K."/>
            <person name="Hashizume C."/>
            <person name="Ogata N."/>
            <person name="Kikusui T."/>
            <person name="Takeuchi Y."/>
            <person name="Mori Y."/>
        </authorList>
    </citation>
    <scope>NUCLEOTIDE SEQUENCE [MRNA]</scope>
    <source>
        <strain>Beagle</strain>
    </source>
</reference>
<reference key="2">
    <citation type="journal article" date="2005" name="Eur. J. Pharmacol.">
        <title>Molecular and pharmacological characterization of serotonin 5-HT(2A) and 5-HT(2B) receptor subtypes in dog.</title>
        <authorList>
            <person name="Bonaventure P."/>
            <person name="Nepomuceno D."/>
            <person name="Miller K."/>
            <person name="Chen J."/>
            <person name="Kuei C."/>
            <person name="Kamme F."/>
            <person name="Tran D.T."/>
            <person name="Lovenberg T.W."/>
            <person name="Liu C."/>
        </authorList>
    </citation>
    <scope>NUCLEOTIDE SEQUENCE [MRNA]</scope>
    <scope>FUNCTION</scope>
    <scope>SUBCELLULAR LOCATION</scope>
    <scope>TISSUE SPECIFICITY</scope>
</reference>
<reference key="3">
    <citation type="submission" date="1998-01" db="EMBL/GenBank/DDBJ databases">
        <authorList>
            <person name="Sgard F."/>
        </authorList>
    </citation>
    <scope>NUCLEOTIDE SEQUENCE [MRNA] OF 120-307</scope>
    <source>
        <tissue>Femoral artery</tissue>
    </source>
</reference>